<organism>
    <name type="scientific">Zea mays</name>
    <name type="common">Maize</name>
    <dbReference type="NCBI Taxonomy" id="4577"/>
    <lineage>
        <taxon>Eukaryota</taxon>
        <taxon>Viridiplantae</taxon>
        <taxon>Streptophyta</taxon>
        <taxon>Embryophyta</taxon>
        <taxon>Tracheophyta</taxon>
        <taxon>Spermatophyta</taxon>
        <taxon>Magnoliopsida</taxon>
        <taxon>Liliopsida</taxon>
        <taxon>Poales</taxon>
        <taxon>Poaceae</taxon>
        <taxon>PACMAD clade</taxon>
        <taxon>Panicoideae</taxon>
        <taxon>Andropogonodae</taxon>
        <taxon>Andropogoneae</taxon>
        <taxon>Tripsacinae</taxon>
        <taxon>Zea</taxon>
    </lineage>
</organism>
<sequence length="534" mass="57229">MAVVYYLLLAGLIACSHALAAGTPALGDDRGRPWPASLAALALDGKLRTDSNATAAASTDFGNITSALPAAVLYPSSTGDLVALLSAANSTPGWPYTIAFRGRGHSLMGQAFAPGGVVVNMASLGDAAAPPRINVSADGRYVDAGGEQVWIDVLRASLARGVAPRSWNDYLYLTVGGTLSNAGISGQAFRHGPQISNVLEMDVITGHGEMVTCSKQLNADLFDAVLGGLGQFGVITRARIAVEPAPARARWVRFVYTDFAAFSADQERLTAPRPGGGGASFGPMSYVEGSVFVNQSLATDLANTGFFTDADVARIVALAGERNATTVYSIEATLNYDNATAAAAAVDQELASVLGTLSYVEGFAFQRDVAYAAFLDRVHGEEVALNKLGLWRVPHPWLNMFVPRSRIADFDRGVFKGILQGTDIVGPLIVYPLNKSMWDDGMSAATPSEDVFYAVSLLFSSVAPNDLARLQEQNRRILRFCDLAGIQYKTYLARHTDRSDWVRHFGAAKWNRFVEMKNKYDPKRLLSPGQDIFN</sequence>
<gene>
    <name type="primary">CKX1</name>
</gene>
<keyword id="KW-0002">3D-structure</keyword>
<keyword id="KW-0903">Direct protein sequencing</keyword>
<keyword id="KW-0274">FAD</keyword>
<keyword id="KW-0285">Flavoprotein</keyword>
<keyword id="KW-0325">Glycoprotein</keyword>
<keyword id="KW-0560">Oxidoreductase</keyword>
<keyword id="KW-1185">Reference proteome</keyword>
<keyword id="KW-0964">Secreted</keyword>
<keyword id="KW-0732">Signal</keyword>
<accession>Q9T0N8</accession>
<accession>O81158</accession>
<comment type="function">
    <text evidence="4">Catalyzes the oxidation of cytokinins, a family of N(6)-substituted adenine derivatives that are plant hormones, where the substituent is an isopentenyl group (PubMed:11154345). Cleaves trans-zeatin, N(6)-dimethylallyladenine (isopentenyladenine), isopentenyladenosine, zeatin riboside and cis-zeatin, but not dihydrozeatin, kinetin and benzylaminopurine (PubMed:11154345).</text>
</comment>
<comment type="catalytic activity">
    <reaction evidence="4">
        <text>N(6)-dimethylallyladenine + A + H2O = 3-methyl-2-butenal + adenine + AH2</text>
        <dbReference type="Rhea" id="RHEA:13625"/>
        <dbReference type="ChEBI" id="CHEBI:13193"/>
        <dbReference type="ChEBI" id="CHEBI:15377"/>
        <dbReference type="ChEBI" id="CHEBI:15825"/>
        <dbReference type="ChEBI" id="CHEBI:16708"/>
        <dbReference type="ChEBI" id="CHEBI:17499"/>
        <dbReference type="ChEBI" id="CHEBI:17660"/>
        <dbReference type="EC" id="1.5.99.12"/>
    </reaction>
</comment>
<comment type="cofactor">
    <cofactor evidence="5">
        <name>FAD</name>
        <dbReference type="ChEBI" id="CHEBI:57692"/>
    </cofactor>
</comment>
<comment type="activity regulation">
    <text>Competitive inhibition by phenylureas.</text>
</comment>
<comment type="subunit">
    <text evidence="1">Monomer.</text>
</comment>
<comment type="subcellular location">
    <subcellularLocation>
        <location>Secreted</location>
        <location>Extracellular space</location>
    </subcellularLocation>
</comment>
<comment type="tissue specificity">
    <text evidence="4">Expressed in immature kernels and unpollinated cobs. Weakly expressed in kernels harvested two weeks after anthesis.</text>
</comment>
<comment type="PTM">
    <text>Glycosylated; with approximately 10 hexose residues per site.</text>
</comment>
<comment type="similarity">
    <text evidence="7">Belongs to the oxygen-dependent FAD-linked oxidoreductase family.</text>
</comment>
<proteinExistence type="evidence at protein level"/>
<dbReference type="EC" id="1.5.99.12" evidence="4"/>
<dbReference type="EMBL" id="Y18377">
    <property type="protein sequence ID" value="CAA77151.1"/>
    <property type="molecule type" value="mRNA"/>
</dbReference>
<dbReference type="EMBL" id="AF044603">
    <property type="protein sequence ID" value="AAC27500.1"/>
    <property type="molecule type" value="Genomic_DNA"/>
</dbReference>
<dbReference type="PIR" id="T01500">
    <property type="entry name" value="T01500"/>
</dbReference>
<dbReference type="PIR" id="T51929">
    <property type="entry name" value="T51929"/>
</dbReference>
<dbReference type="RefSeq" id="NP_001105591.1">
    <property type="nucleotide sequence ID" value="NM_001112121.1"/>
</dbReference>
<dbReference type="PDB" id="1W1O">
    <property type="method" value="X-ray"/>
    <property type="resolution" value="1.70 A"/>
    <property type="chains" value="A=1-534"/>
</dbReference>
<dbReference type="PDB" id="1W1Q">
    <property type="method" value="X-ray"/>
    <property type="resolution" value="1.80 A"/>
    <property type="chains" value="A=1-534"/>
</dbReference>
<dbReference type="PDB" id="1W1R">
    <property type="method" value="X-ray"/>
    <property type="resolution" value="1.90 A"/>
    <property type="chains" value="A=1-534"/>
</dbReference>
<dbReference type="PDB" id="1W1S">
    <property type="method" value="X-ray"/>
    <property type="resolution" value="2.00 A"/>
    <property type="chains" value="A=1-534"/>
</dbReference>
<dbReference type="PDB" id="2QKN">
    <property type="method" value="X-ray"/>
    <property type="resolution" value="2.15 A"/>
    <property type="chains" value="A=19-534"/>
</dbReference>
<dbReference type="PDB" id="2QPM">
    <property type="method" value="X-ray"/>
    <property type="resolution" value="1.85 A"/>
    <property type="chains" value="A=19-534"/>
</dbReference>
<dbReference type="PDB" id="3BW7">
    <property type="method" value="X-ray"/>
    <property type="resolution" value="1.95 A"/>
    <property type="chains" value="A=19-534"/>
</dbReference>
<dbReference type="PDB" id="3C0P">
    <property type="method" value="X-ray"/>
    <property type="resolution" value="1.95 A"/>
    <property type="chains" value="A=19-534"/>
</dbReference>
<dbReference type="PDB" id="3DQ0">
    <property type="method" value="X-ray"/>
    <property type="resolution" value="1.90 A"/>
    <property type="chains" value="A=19-534"/>
</dbReference>
<dbReference type="PDB" id="3KJM">
    <property type="method" value="X-ray"/>
    <property type="resolution" value="1.90 A"/>
    <property type="chains" value="A=19-534"/>
</dbReference>
<dbReference type="PDB" id="3S1C">
    <property type="method" value="X-ray"/>
    <property type="resolution" value="2.09 A"/>
    <property type="chains" value="A=19-534"/>
</dbReference>
<dbReference type="PDB" id="3S1D">
    <property type="method" value="X-ray"/>
    <property type="resolution" value="1.75 A"/>
    <property type="chains" value="A=19-534"/>
</dbReference>
<dbReference type="PDB" id="3S1E">
    <property type="method" value="X-ray"/>
    <property type="resolution" value="1.90 A"/>
    <property type="chains" value="A=19-534"/>
</dbReference>
<dbReference type="PDB" id="3S1F">
    <property type="method" value="X-ray"/>
    <property type="resolution" value="2.00 A"/>
    <property type="chains" value="A=19-534"/>
</dbReference>
<dbReference type="PDBsum" id="1W1O"/>
<dbReference type="PDBsum" id="1W1Q"/>
<dbReference type="PDBsum" id="1W1R"/>
<dbReference type="PDBsum" id="1W1S"/>
<dbReference type="PDBsum" id="2QKN"/>
<dbReference type="PDBsum" id="2QPM"/>
<dbReference type="PDBsum" id="3BW7"/>
<dbReference type="PDBsum" id="3C0P"/>
<dbReference type="PDBsum" id="3DQ0"/>
<dbReference type="PDBsum" id="3KJM"/>
<dbReference type="PDBsum" id="3S1C"/>
<dbReference type="PDBsum" id="3S1D"/>
<dbReference type="PDBsum" id="3S1E"/>
<dbReference type="PDBsum" id="3S1F"/>
<dbReference type="SMR" id="Q9T0N8"/>
<dbReference type="FunCoup" id="Q9T0N8">
    <property type="interactions" value="110"/>
</dbReference>
<dbReference type="STRING" id="4577.Q9T0N8"/>
<dbReference type="ChEMBL" id="CHEMBL5363"/>
<dbReference type="GlyCosmos" id="Q9T0N8">
    <property type="glycosylation" value="7 sites, No reported glycans"/>
</dbReference>
<dbReference type="iPTMnet" id="Q9T0N8"/>
<dbReference type="GeneID" id="542585"/>
<dbReference type="KEGG" id="zma:542585"/>
<dbReference type="MaizeGDB" id="194080"/>
<dbReference type="eggNOG" id="KOG1231">
    <property type="taxonomic scope" value="Eukaryota"/>
</dbReference>
<dbReference type="InParanoid" id="Q9T0N8"/>
<dbReference type="OrthoDB" id="415825at2759"/>
<dbReference type="BioCyc" id="MetaCyc:CKX1-MONOMER"/>
<dbReference type="BRENDA" id="1.5.99.12">
    <property type="organism ID" value="6752"/>
</dbReference>
<dbReference type="SABIO-RK" id="Q9T0N8"/>
<dbReference type="EvolutionaryTrace" id="Q9T0N8"/>
<dbReference type="PRO" id="PR:Q9T0N8"/>
<dbReference type="Proteomes" id="UP000007305">
    <property type="component" value="Unplaced"/>
</dbReference>
<dbReference type="ExpressionAtlas" id="Q9T0N8">
    <property type="expression patterns" value="baseline and differential"/>
</dbReference>
<dbReference type="GO" id="GO:0005576">
    <property type="term" value="C:extracellular region"/>
    <property type="evidence" value="ECO:0007669"/>
    <property type="project" value="UniProtKB-SubCell"/>
</dbReference>
<dbReference type="GO" id="GO:0019139">
    <property type="term" value="F:cytokinin dehydrogenase activity"/>
    <property type="evidence" value="ECO:0007669"/>
    <property type="project" value="UniProtKB-EC"/>
</dbReference>
<dbReference type="GO" id="GO:0071949">
    <property type="term" value="F:FAD binding"/>
    <property type="evidence" value="ECO:0007669"/>
    <property type="project" value="InterPro"/>
</dbReference>
<dbReference type="GO" id="GO:0016491">
    <property type="term" value="F:oxidoreductase activity"/>
    <property type="evidence" value="ECO:0000318"/>
    <property type="project" value="GO_Central"/>
</dbReference>
<dbReference type="GO" id="GO:0009690">
    <property type="term" value="P:cytokinin metabolic process"/>
    <property type="evidence" value="ECO:0007669"/>
    <property type="project" value="InterPro"/>
</dbReference>
<dbReference type="FunFam" id="3.30.465.10:FF:000021">
    <property type="entry name" value="Cytokinin dehydrogenase 1"/>
    <property type="match status" value="1"/>
</dbReference>
<dbReference type="Gene3D" id="3.30.465.10">
    <property type="match status" value="1"/>
</dbReference>
<dbReference type="Gene3D" id="3.40.462.10">
    <property type="entry name" value="FAD-linked oxidases, C-terminal domain"/>
    <property type="match status" value="1"/>
</dbReference>
<dbReference type="Gene3D" id="3.30.43.10">
    <property type="entry name" value="Uridine Diphospho-n-acetylenolpyruvylglucosamine Reductase, domain 2"/>
    <property type="match status" value="1"/>
</dbReference>
<dbReference type="InterPro" id="IPR016170">
    <property type="entry name" value="Cytok_DH_C_sf"/>
</dbReference>
<dbReference type="InterPro" id="IPR015345">
    <property type="entry name" value="Cytokinin_DH_FAD/cytokin-bd"/>
</dbReference>
<dbReference type="InterPro" id="IPR016166">
    <property type="entry name" value="FAD-bd_PCMH"/>
</dbReference>
<dbReference type="InterPro" id="IPR036318">
    <property type="entry name" value="FAD-bd_PCMH-like_sf"/>
</dbReference>
<dbReference type="InterPro" id="IPR016167">
    <property type="entry name" value="FAD-bd_PCMH_sub1"/>
</dbReference>
<dbReference type="InterPro" id="IPR016169">
    <property type="entry name" value="FAD-bd_PCMH_sub2"/>
</dbReference>
<dbReference type="InterPro" id="IPR016164">
    <property type="entry name" value="FAD-linked_Oxase-like_C"/>
</dbReference>
<dbReference type="InterPro" id="IPR050432">
    <property type="entry name" value="FAD-linked_Oxidoreductases_BP"/>
</dbReference>
<dbReference type="InterPro" id="IPR006094">
    <property type="entry name" value="Oxid_FAD_bind_N"/>
</dbReference>
<dbReference type="InterPro" id="IPR006093">
    <property type="entry name" value="Oxy_OxRdtase_FAD_BS"/>
</dbReference>
<dbReference type="PANTHER" id="PTHR13878:SF42">
    <property type="entry name" value="CYTOKININ DEHYDROGENASE 1"/>
    <property type="match status" value="1"/>
</dbReference>
<dbReference type="PANTHER" id="PTHR13878">
    <property type="entry name" value="GULONOLACTONE OXIDASE"/>
    <property type="match status" value="1"/>
</dbReference>
<dbReference type="Pfam" id="PF09265">
    <property type="entry name" value="Cytokin-bind"/>
    <property type="match status" value="1"/>
</dbReference>
<dbReference type="Pfam" id="PF01565">
    <property type="entry name" value="FAD_binding_4"/>
    <property type="match status" value="1"/>
</dbReference>
<dbReference type="SUPFAM" id="SSF56176">
    <property type="entry name" value="FAD-binding/transporter-associated domain-like"/>
    <property type="match status" value="1"/>
</dbReference>
<dbReference type="SUPFAM" id="SSF55103">
    <property type="entry name" value="FAD-linked oxidases, C-terminal domain"/>
    <property type="match status" value="1"/>
</dbReference>
<dbReference type="PROSITE" id="PS51387">
    <property type="entry name" value="FAD_PCMH"/>
    <property type="match status" value="1"/>
</dbReference>
<dbReference type="PROSITE" id="PS00862">
    <property type="entry name" value="OX2_COVAL_FAD"/>
    <property type="match status" value="1"/>
</dbReference>
<protein>
    <recommendedName>
        <fullName>Cytokinin dehydrogenase 1</fullName>
        <ecNumber evidence="4">1.5.99.12</ecNumber>
    </recommendedName>
    <alternativeName>
        <fullName>Cytokinin oxidase 1</fullName>
        <shortName>CKO 1</shortName>
        <shortName>COX 1</shortName>
    </alternativeName>
    <alternativeName>
        <fullName>ZmCKX1</fullName>
    </alternativeName>
</protein>
<evidence type="ECO:0000250" key="1"/>
<evidence type="ECO:0000255" key="2"/>
<evidence type="ECO:0000255" key="3">
    <source>
        <dbReference type="PROSITE-ProRule" id="PRU00718"/>
    </source>
</evidence>
<evidence type="ECO:0000269" key="4">
    <source>
    </source>
</evidence>
<evidence type="ECO:0000269" key="5">
    <source>
    </source>
</evidence>
<evidence type="ECO:0000269" key="6">
    <source>
    </source>
</evidence>
<evidence type="ECO:0000305" key="7"/>
<evidence type="ECO:0007744" key="8">
    <source>
        <dbReference type="PDB" id="1W1O"/>
    </source>
</evidence>
<evidence type="ECO:0007744" key="9">
    <source>
        <dbReference type="PDB" id="1W1Q"/>
    </source>
</evidence>
<evidence type="ECO:0007744" key="10">
    <source>
        <dbReference type="PDB" id="1W1R"/>
    </source>
</evidence>
<evidence type="ECO:0007744" key="11">
    <source>
        <dbReference type="PDB" id="3BW7"/>
    </source>
</evidence>
<evidence type="ECO:0007829" key="12">
    <source>
        <dbReference type="PDB" id="1W1O"/>
    </source>
</evidence>
<evidence type="ECO:0007829" key="13">
    <source>
        <dbReference type="PDB" id="3S1D"/>
    </source>
</evidence>
<feature type="signal peptide" evidence="2">
    <location>
        <begin position="1"/>
        <end position="18"/>
    </location>
</feature>
<feature type="chain" id="PRO_0000020424" description="Cytokinin dehydrogenase 1">
    <location>
        <begin position="19"/>
        <end position="534"/>
    </location>
</feature>
<feature type="domain" description="FAD-binding PCMH-type" evidence="3">
    <location>
        <begin position="65"/>
        <end position="245"/>
    </location>
</feature>
<feature type="binding site" evidence="5 8 9">
    <location>
        <position position="100"/>
    </location>
    <ligand>
        <name>FAD</name>
        <dbReference type="ChEBI" id="CHEBI:57692"/>
    </ligand>
</feature>
<feature type="binding site" evidence="5 8 9">
    <location>
        <position position="102"/>
    </location>
    <ligand>
        <name>FAD</name>
        <dbReference type="ChEBI" id="CHEBI:57692"/>
    </ligand>
</feature>
<feature type="binding site" evidence="5 8 9">
    <location>
        <position position="103"/>
    </location>
    <ligand>
        <name>FAD</name>
        <dbReference type="ChEBI" id="CHEBI:57692"/>
    </ligand>
</feature>
<feature type="binding site" evidence="5 8 9">
    <location>
        <position position="104"/>
    </location>
    <ligand>
        <name>FAD</name>
        <dbReference type="ChEBI" id="CHEBI:57692"/>
    </ligand>
</feature>
<feature type="binding site" evidence="5 8 9">
    <location>
        <position position="106"/>
    </location>
    <ligand>
        <name>FAD</name>
        <dbReference type="ChEBI" id="CHEBI:57692"/>
    </ligand>
</feature>
<feature type="binding site" evidence="5 8 9">
    <location>
        <position position="110"/>
    </location>
    <ligand>
        <name>FAD</name>
        <dbReference type="ChEBI" id="CHEBI:57692"/>
    </ligand>
</feature>
<feature type="binding site" evidence="5 8 9">
    <location>
        <position position="169"/>
    </location>
    <ligand>
        <name>FAD</name>
        <dbReference type="ChEBI" id="CHEBI:57692"/>
    </ligand>
</feature>
<feature type="binding site" evidence="5 9">
    <location>
        <position position="169"/>
    </location>
    <ligand>
        <name>N(6)-dimethylallyladenine</name>
        <dbReference type="ChEBI" id="CHEBI:17660"/>
    </ligand>
</feature>
<feature type="binding site" evidence="5 10">
    <location>
        <position position="169"/>
    </location>
    <ligand>
        <name>trans-zeatin</name>
        <dbReference type="ChEBI" id="CHEBI:16522"/>
    </ligand>
</feature>
<feature type="binding site" evidence="5 8 9">
    <location>
        <position position="174"/>
    </location>
    <ligand>
        <name>FAD</name>
        <dbReference type="ChEBI" id="CHEBI:57692"/>
    </ligand>
</feature>
<feature type="binding site" evidence="5 8 9">
    <location>
        <position position="180"/>
    </location>
    <ligand>
        <name>FAD</name>
        <dbReference type="ChEBI" id="CHEBI:57692"/>
    </ligand>
</feature>
<feature type="binding site" evidence="5 8 9">
    <location>
        <position position="184"/>
    </location>
    <ligand>
        <name>FAD</name>
        <dbReference type="ChEBI" id="CHEBI:57692"/>
    </ligand>
</feature>
<feature type="binding site" evidence="5 8 9">
    <location>
        <position position="235"/>
    </location>
    <ligand>
        <name>FAD</name>
        <dbReference type="ChEBI" id="CHEBI:57692"/>
    </ligand>
</feature>
<feature type="binding site" evidence="5 9">
    <location>
        <position position="381"/>
    </location>
    <ligand>
        <name>N(6)-dimethylallyladenine</name>
        <dbReference type="ChEBI" id="CHEBI:17660"/>
    </ligand>
</feature>
<feature type="binding site" evidence="5 10">
    <location>
        <position position="381"/>
    </location>
    <ligand>
        <name>trans-zeatin</name>
        <dbReference type="ChEBI" id="CHEBI:16522"/>
    </ligand>
</feature>
<feature type="binding site" evidence="5 10">
    <location>
        <position position="456"/>
    </location>
    <ligand>
        <name>trans-zeatin</name>
        <dbReference type="ChEBI" id="CHEBI:16522"/>
    </ligand>
</feature>
<feature type="binding site" evidence="5 8 9">
    <location>
        <position position="491"/>
    </location>
    <ligand>
        <name>FAD</name>
        <dbReference type="ChEBI" id="CHEBI:57692"/>
    </ligand>
</feature>
<feature type="binding site" evidence="5 8 9">
    <location>
        <position position="527"/>
    </location>
    <ligand>
        <name>FAD</name>
        <dbReference type="ChEBI" id="CHEBI:57692"/>
    </ligand>
</feature>
<feature type="binding site" evidence="5 8 9">
    <location>
        <position position="530"/>
    </location>
    <ligand>
        <name>FAD</name>
        <dbReference type="ChEBI" id="CHEBI:57692"/>
    </ligand>
</feature>
<feature type="modified residue" description="Pros-8alpha-FAD histidine" evidence="5 8 9">
    <location>
        <position position="105"/>
    </location>
</feature>
<feature type="glycosylation site" description="N-linked (GlcNAc...) asparagine" evidence="2">
    <location>
        <position position="52"/>
    </location>
</feature>
<feature type="glycosylation site" description="N-linked (GlcNAc...) asparagine" evidence="5 8 9">
    <location>
        <position position="63"/>
    </location>
</feature>
<feature type="glycosylation site" description="N-linked (GlcNAc...) asparagine" evidence="5 8 9">
    <location>
        <position position="89"/>
    </location>
</feature>
<feature type="glycosylation site" description="N-linked (GlcNAc...) asparagine" evidence="5 8 9">
    <location>
        <position position="134"/>
    </location>
</feature>
<feature type="glycosylation site" description="N-linked (GlcNAc...) asparagine" evidence="5 8 9">
    <location>
        <position position="294"/>
    </location>
</feature>
<feature type="glycosylation site" description="N-linked (GlcNAc...) asparagine" evidence="6 11">
    <location>
        <position position="323"/>
    </location>
</feature>
<feature type="glycosylation site" description="N-linked (GlcNAc...) asparagine" evidence="6 11">
    <location>
        <position position="338"/>
    </location>
</feature>
<feature type="glycosylation site" description="N-linked (GlcNAc...) asparagine" evidence="2">
    <location>
        <position position="434"/>
    </location>
</feature>
<feature type="sequence conflict" description="In Ref. 1; CAA77151." evidence="7" ref="1">
    <original>G</original>
    <variation>A</variation>
    <location>
        <position position="79"/>
    </location>
</feature>
<feature type="sequence conflict" description="In Ref. 1; CAA77151." evidence="7" ref="1">
    <original>N</original>
    <variation>T</variation>
    <location>
        <position position="168"/>
    </location>
</feature>
<feature type="sequence conflict" description="In Ref. 1; CAA77151." evidence="7" ref="1">
    <original>F</original>
    <variation>L</variation>
    <location>
        <position position="254"/>
    </location>
</feature>
<feature type="turn" evidence="12">
    <location>
        <begin position="41"/>
        <end position="45"/>
    </location>
</feature>
<feature type="helix" evidence="12">
    <location>
        <begin position="51"/>
        <end position="56"/>
    </location>
</feature>
<feature type="strand" evidence="12">
    <location>
        <begin position="70"/>
        <end position="73"/>
    </location>
</feature>
<feature type="helix" evidence="12">
    <location>
        <begin position="78"/>
        <end position="90"/>
    </location>
</feature>
<feature type="strand" evidence="12">
    <location>
        <begin position="98"/>
        <end position="103"/>
    </location>
</feature>
<feature type="strand" evidence="12">
    <location>
        <begin position="107"/>
        <end position="109"/>
    </location>
</feature>
<feature type="strand" evidence="12">
    <location>
        <begin position="116"/>
        <end position="120"/>
    </location>
</feature>
<feature type="helix" evidence="12">
    <location>
        <begin position="121"/>
        <end position="125"/>
    </location>
</feature>
<feature type="strand" evidence="12">
    <location>
        <begin position="127"/>
        <end position="130"/>
    </location>
</feature>
<feature type="strand" evidence="12">
    <location>
        <begin position="132"/>
        <end position="135"/>
    </location>
</feature>
<feature type="strand" evidence="12">
    <location>
        <begin position="139"/>
        <end position="145"/>
    </location>
</feature>
<feature type="helix" evidence="12">
    <location>
        <begin position="150"/>
        <end position="158"/>
    </location>
</feature>
<feature type="turn" evidence="12">
    <location>
        <begin position="159"/>
        <end position="161"/>
    </location>
</feature>
<feature type="strand" evidence="12">
    <location>
        <begin position="162"/>
        <end position="165"/>
    </location>
</feature>
<feature type="strand" evidence="13">
    <location>
        <begin position="169"/>
        <end position="171"/>
    </location>
</feature>
<feature type="helix" evidence="12">
    <location>
        <begin position="175"/>
        <end position="179"/>
    </location>
</feature>
<feature type="helix" evidence="12">
    <location>
        <begin position="188"/>
        <end position="191"/>
    </location>
</feature>
<feature type="helix" evidence="12">
    <location>
        <begin position="194"/>
        <end position="196"/>
    </location>
</feature>
<feature type="strand" evidence="12">
    <location>
        <begin position="197"/>
        <end position="205"/>
    </location>
</feature>
<feature type="strand" evidence="12">
    <location>
        <begin position="210"/>
        <end position="218"/>
    </location>
</feature>
<feature type="helix" evidence="12">
    <location>
        <begin position="219"/>
        <end position="225"/>
    </location>
</feature>
<feature type="strand" evidence="12">
    <location>
        <begin position="232"/>
        <end position="244"/>
    </location>
</feature>
<feature type="strand" evidence="12">
    <location>
        <begin position="247"/>
        <end position="257"/>
    </location>
</feature>
<feature type="helix" evidence="12">
    <location>
        <begin position="259"/>
        <end position="270"/>
    </location>
</feature>
<feature type="strand" evidence="12">
    <location>
        <begin position="285"/>
        <end position="293"/>
    </location>
</feature>
<feature type="helix" evidence="12">
    <location>
        <begin position="294"/>
        <end position="296"/>
    </location>
</feature>
<feature type="helix" evidence="12">
    <location>
        <begin position="297"/>
        <end position="302"/>
    </location>
</feature>
<feature type="strand" evidence="12">
    <location>
        <begin position="305"/>
        <end position="307"/>
    </location>
</feature>
<feature type="helix" evidence="12">
    <location>
        <begin position="309"/>
        <end position="321"/>
    </location>
</feature>
<feature type="strand" evidence="12">
    <location>
        <begin position="325"/>
        <end position="336"/>
    </location>
</feature>
<feature type="helix" evidence="12">
    <location>
        <begin position="345"/>
        <end position="354"/>
    </location>
</feature>
<feature type="strand" evidence="12">
    <location>
        <begin position="364"/>
        <end position="370"/>
    </location>
</feature>
<feature type="helix" evidence="12">
    <location>
        <begin position="371"/>
        <end position="375"/>
    </location>
</feature>
<feature type="helix" evidence="12">
    <location>
        <begin position="377"/>
        <end position="387"/>
    </location>
</feature>
<feature type="strand" evidence="12">
    <location>
        <begin position="391"/>
        <end position="393"/>
    </location>
</feature>
<feature type="strand" evidence="12">
    <location>
        <begin position="398"/>
        <end position="403"/>
    </location>
</feature>
<feature type="helix" evidence="12">
    <location>
        <begin position="404"/>
        <end position="406"/>
    </location>
</feature>
<feature type="helix" evidence="12">
    <location>
        <begin position="407"/>
        <end position="414"/>
    </location>
</feature>
<feature type="turn" evidence="12">
    <location>
        <begin position="415"/>
        <end position="421"/>
    </location>
</feature>
<feature type="strand" evidence="12">
    <location>
        <begin position="428"/>
        <end position="434"/>
    </location>
</feature>
<feature type="helix" evidence="12">
    <location>
        <begin position="435"/>
        <end position="437"/>
    </location>
</feature>
<feature type="strand" evidence="12">
    <location>
        <begin position="448"/>
        <end position="457"/>
    </location>
</feature>
<feature type="helix" evidence="12">
    <location>
        <begin position="466"/>
        <end position="483"/>
    </location>
</feature>
<feature type="strand" evidence="12">
    <location>
        <begin position="489"/>
        <end position="492"/>
    </location>
</feature>
<feature type="helix" evidence="12">
    <location>
        <begin position="498"/>
        <end position="505"/>
    </location>
</feature>
<feature type="helix" evidence="12">
    <location>
        <begin position="507"/>
        <end position="520"/>
    </location>
</feature>
<feature type="helix" evidence="12">
    <location>
        <begin position="528"/>
        <end position="530"/>
    </location>
</feature>
<reference key="1">
    <citation type="journal article" date="1999" name="Plant J.">
        <title>Cytokinin oxidase from Zea mays: purification, cDNA cloning and expression in moss protoplasts.</title>
        <authorList>
            <person name="Houba-Herin N."/>
            <person name="Pethe C."/>
            <person name="D'Alayer J."/>
            <person name="Laloue M."/>
        </authorList>
    </citation>
    <scope>NUCLEOTIDE SEQUENCE [MRNA]</scope>
    <scope>PROTEIN SEQUENCE OF 417-435; 490-517 AND 524-534</scope>
    <source>
        <strain>cv. Nobilis</strain>
        <tissue>Kernel</tissue>
    </source>
</reference>
<reference key="2">
    <citation type="journal article" date="1999" name="Biochem. Biophys. Res. Commun.">
        <title>Isolation of a gene encoding a glycosylated cytokinin oxidase from maize.</title>
        <authorList>
            <person name="Morris R.O."/>
            <person name="Bilyeu K.D."/>
            <person name="Laskey J.G."/>
            <person name="Cheikh N.N."/>
        </authorList>
    </citation>
    <scope>NUCLEOTIDE SEQUENCE [GENOMIC DNA]</scope>
    <scope>PROTEIN SEQUENCE OF 286-308; 369-377; 388-392 AND 417-431</scope>
    <scope>IDENTIFICATION BY MASS SPECTROMETRY</scope>
</reference>
<reference key="3">
    <citation type="journal article" date="2001" name="Plant Physiol.">
        <title>Molecular and biochemical characterization of a cytokinin oxidase from maize.</title>
        <authorList>
            <person name="Bilyeu K.D."/>
            <person name="Cole J.L."/>
            <person name="Laskey J.G."/>
            <person name="Riekhof W.R."/>
            <person name="Esparza T.J."/>
            <person name="Kramer M.D."/>
            <person name="Morris R.O."/>
        </authorList>
    </citation>
    <scope>FUNCTION</scope>
    <scope>CATALYTIC ACTIVITY</scope>
    <scope>TISSUE SPECIFICITY</scope>
</reference>
<reference key="4">
    <citation type="journal article" date="2003" name="J. Plant Res.">
        <title>Structure and function of cytokinin oxidase/dehydrogenase genes of maize, rice, Arabidopsis and other species.</title>
        <authorList>
            <person name="Schmuelling T."/>
            <person name="Werner T."/>
            <person name="Riefler M."/>
            <person name="Krupkova E."/>
            <person name="Bartrina y Manns I."/>
        </authorList>
    </citation>
    <scope>REVIEW</scope>
    <scope>NOMENCLATURE</scope>
</reference>
<reference key="5">
    <citation type="journal article" date="2004" name="J. Mol. Biol.">
        <title>Structures of Michaelis and product complexes of plant cytokinin dehydrogenase: implications for flavoenzyme catalysis.</title>
        <authorList>
            <person name="Malito E."/>
            <person name="Coda A."/>
            <person name="Bilyeu K.D."/>
            <person name="Fraaije M.W."/>
            <person name="Mattevi A."/>
        </authorList>
    </citation>
    <scope>X-RAY CRYSTALLOGRAPHY (1.7 ANGSTROMS) OF 19-534 OF APOENZYME AND IN COMPLEX WITH BENZYLAMINOPURINE; ISOPENTENYLADENINE OR TRANS-ZEATIN</scope>
    <scope>GLYCOSYLATION AT ASN-63; ASN-89; ASN-134 AND ASN-294</scope>
</reference>
<reference key="6">
    <citation type="journal article" date="2008" name="J. Mol. Biol.">
        <title>Mechanism-based inhibitors of cytokinin oxidase/dehydrogenase attack FAD cofactor.</title>
        <authorList>
            <person name="Kopecny D."/>
            <person name="Sebela M."/>
            <person name="Briozzo P."/>
            <person name="Spichal L."/>
            <person name="Houba-Herin N."/>
            <person name="Masek V."/>
            <person name="Joly N."/>
            <person name="Madzak C."/>
            <person name="Anzenbacher P."/>
            <person name="Laloue M."/>
        </authorList>
    </citation>
    <scope>X-RAY CRYSTALLOGRAPHY (1.95 ANGSTROMS) OF 19-534 IN COMPLEX WITH FAD</scope>
    <scope>GLYCOSYLATION AT ASN-63; ASN-134; ASN-294; ASN-323 AND ASN-338</scope>
</reference>
<reference key="7">
    <citation type="journal article" date="2010" name="Biochimie">
        <title>Phenyl- and benzylurea cytokinins as competitive inhibitors of cytokinin oxidase/dehydrogenase: a structural study.</title>
        <authorList>
            <person name="Kopecny D."/>
            <person name="Briozzo P."/>
            <person name="Popelkova H."/>
            <person name="Sebela M."/>
            <person name="Koncitikova R."/>
            <person name="Spichal L."/>
            <person name="Nisler J."/>
            <person name="Madzak C."/>
            <person name="Frebort I."/>
            <person name="Laloue M."/>
            <person name="Houba-Herin N."/>
        </authorList>
    </citation>
    <scope>X-RAY CRYSTALLOGRAPHY (1.85 ANGSTROMS) OF 19-534 IN COMPLEX WITH FAD</scope>
    <scope>GLYCOSYLATION AT ASN-63; ASN-134; ASN-294; ASN-323 AND ASN-338</scope>
</reference>
<reference key="8">
    <citation type="journal article" date="2016" name="FEBS J.">
        <title>Kinetic and structural investigation of the cytokinin oxidase/dehydrogenase active site.</title>
        <authorList>
            <person name="Kopecny D."/>
            <person name="Koncitikova R."/>
            <person name="Popelka H."/>
            <person name="Briozzo P."/>
            <person name="Vigouroux A."/>
            <person name="Kopecna M."/>
            <person name="Zalabak D."/>
            <person name="Sebela M."/>
            <person name="Skopalova J."/>
            <person name="Frebort I."/>
            <person name="Morera S."/>
        </authorList>
    </citation>
    <scope>X-RAY CRYSTALLOGRAPHY (1.75 ANGSTROMS) OF 19-534 IN COMPLEX WITH FAD</scope>
    <scope>GLYCOSYLATION AT ASN-63; ASN-134; ASN-294 AND ASN-323</scope>
</reference>
<name>CKX1_MAIZE</name>